<proteinExistence type="evidence at protein level"/>
<organism>
    <name type="scientific">Schizosaccharomyces pombe (strain 972 / ATCC 24843)</name>
    <name type="common">Fission yeast</name>
    <dbReference type="NCBI Taxonomy" id="284812"/>
    <lineage>
        <taxon>Eukaryota</taxon>
        <taxon>Fungi</taxon>
        <taxon>Dikarya</taxon>
        <taxon>Ascomycota</taxon>
        <taxon>Taphrinomycotina</taxon>
        <taxon>Schizosaccharomycetes</taxon>
        <taxon>Schizosaccharomycetales</taxon>
        <taxon>Schizosaccharomycetaceae</taxon>
        <taxon>Schizosaccharomyces</taxon>
    </lineage>
</organism>
<name>SPO5_SCHPO</name>
<protein>
    <recommendedName>
        <fullName>Sporulation-specific protein 5</fullName>
    </recommendedName>
    <alternativeName>
        <fullName>Meiotic RNA-binding protein 1</fullName>
    </alternativeName>
    <alternativeName>
        <fullName>Meiotically up-regulated gene 12 protein</fullName>
    </alternativeName>
</protein>
<feature type="chain" id="PRO_0000300506" description="Sporulation-specific protein 5">
    <location>
        <begin position="1"/>
        <end position="567"/>
    </location>
</feature>
<feature type="domain" description="RRM 1" evidence="1">
    <location>
        <begin position="296"/>
        <end position="380"/>
    </location>
</feature>
<feature type="domain" description="RRM 2" evidence="1">
    <location>
        <begin position="384"/>
        <end position="462"/>
    </location>
</feature>
<feature type="region of interest" description="Disordered" evidence="2">
    <location>
        <begin position="1"/>
        <end position="39"/>
    </location>
</feature>
<feature type="region of interest" description="Disordered" evidence="2">
    <location>
        <begin position="52"/>
        <end position="76"/>
    </location>
</feature>
<feature type="compositionally biased region" description="Polar residues" evidence="2">
    <location>
        <begin position="1"/>
        <end position="18"/>
    </location>
</feature>
<feature type="compositionally biased region" description="Low complexity" evidence="2">
    <location>
        <begin position="21"/>
        <end position="35"/>
    </location>
</feature>
<feature type="compositionally biased region" description="Polar residues" evidence="2">
    <location>
        <begin position="56"/>
        <end position="66"/>
    </location>
</feature>
<comment type="function">
    <text evidence="3 5">RNA-binding protein which plays a role in sporulation. Regulates the progression of meiosis I and may function in the vicinity of the Mei2 dot.</text>
</comment>
<comment type="subcellular location">
    <subcellularLocation>
        <location evidence="4 5">Cytoplasm</location>
    </subcellularLocation>
</comment>
<sequence>MNGIITPQKQKQLMSSPSRDPLSTTELSTPTSQTTVDVNDTKKSEGLDSTIILLTPGTSPNATPGSSELGLSKKPNSIKNNTYSTAAQAAYLNRRAADQSTVMTTDPISYANNNINNGTLPQQNAYYANSYYPSYYAQSQAISNNRPGVSGFRPAFNSVAPCYGSQWQTHQSVHPYHVNNTHQYLKPYVQNVYPQMPSLNQPGLHIVNQPTYLAPVPSATVPTNSVSLSMPSFSQGQKNIPAAINQEMSVGTTKENTNYLSQLVGLHPAIPPAIPSMFPMSHDNKKSNMESTSRTRNVYIRGLPPNTSDENLLLYTNRFGKVSSSKAIIDMETNLCKGYGFACFEEEKSALICISAMTLCGYQCSFAKESFSARLQSLQDTESTNLYISNLPLHWNESDISTLFKPSKIISNRVLRDSKEQSRGVGFARMQDRKTAEDIINKFNNFVLDPALPPLQIRFADSTDQKKFKGQTQKRRLWRAREYSVLTKGMTANNAFSKVEEFANNSMPSKVGMYVPLESNTVYQHSPTYDTYGWQSMYPSYSVYPSNYENSRSTTPYHAHPATSAAN</sequence>
<gene>
    <name type="primary">spo5</name>
    <name type="synonym">mrb1</name>
    <name type="synonym">mug12</name>
    <name type="ORF">SPBC29A10.02</name>
    <name type="ORF">SPBC365.18</name>
</gene>
<evidence type="ECO:0000255" key="1">
    <source>
        <dbReference type="PROSITE-ProRule" id="PRU00176"/>
    </source>
</evidence>
<evidence type="ECO:0000256" key="2">
    <source>
        <dbReference type="SAM" id="MobiDB-lite"/>
    </source>
</evidence>
<evidence type="ECO:0000269" key="3">
    <source>
    </source>
</evidence>
<evidence type="ECO:0000269" key="4">
    <source>
    </source>
</evidence>
<evidence type="ECO:0000269" key="5">
    <source>
    </source>
</evidence>
<keyword id="KW-0963">Cytoplasm</keyword>
<keyword id="KW-0469">Meiosis</keyword>
<keyword id="KW-1185">Reference proteome</keyword>
<keyword id="KW-0677">Repeat</keyword>
<keyword id="KW-0694">RNA-binding</keyword>
<keyword id="KW-0749">Sporulation</keyword>
<reference key="1">
    <citation type="journal article" date="2006" name="Eukaryot. Cell">
        <title>Spo5/Mug12, a putative meiosis-specific RNA-binding protein, is essential for meiotic progression and forms Mei2 dot-like nuclear foci.</title>
        <authorList>
            <person name="Kasama T."/>
            <person name="Shigehisa A."/>
            <person name="Hirata A."/>
            <person name="Saito T.T."/>
            <person name="Tougan T."/>
            <person name="Okuzaki D."/>
            <person name="Nojima H."/>
        </authorList>
    </citation>
    <scope>NUCLEOTIDE SEQUENCE [GENOMIC DNA]</scope>
    <scope>FUNCTION</scope>
    <scope>SUBCELLULAR LOCATION</scope>
</reference>
<reference key="2">
    <citation type="journal article" date="2002" name="Nature">
        <title>The genome sequence of Schizosaccharomyces pombe.</title>
        <authorList>
            <person name="Wood V."/>
            <person name="Gwilliam R."/>
            <person name="Rajandream M.A."/>
            <person name="Lyne M.H."/>
            <person name="Lyne R."/>
            <person name="Stewart A."/>
            <person name="Sgouros J.G."/>
            <person name="Peat N."/>
            <person name="Hayles J."/>
            <person name="Baker S.G."/>
            <person name="Basham D."/>
            <person name="Bowman S."/>
            <person name="Brooks K."/>
            <person name="Brown D."/>
            <person name="Brown S."/>
            <person name="Chillingworth T."/>
            <person name="Churcher C.M."/>
            <person name="Collins M."/>
            <person name="Connor R."/>
            <person name="Cronin A."/>
            <person name="Davis P."/>
            <person name="Feltwell T."/>
            <person name="Fraser A."/>
            <person name="Gentles S."/>
            <person name="Goble A."/>
            <person name="Hamlin N."/>
            <person name="Harris D.E."/>
            <person name="Hidalgo J."/>
            <person name="Hodgson G."/>
            <person name="Holroyd S."/>
            <person name="Hornsby T."/>
            <person name="Howarth S."/>
            <person name="Huckle E.J."/>
            <person name="Hunt S."/>
            <person name="Jagels K."/>
            <person name="James K.D."/>
            <person name="Jones L."/>
            <person name="Jones M."/>
            <person name="Leather S."/>
            <person name="McDonald S."/>
            <person name="McLean J."/>
            <person name="Mooney P."/>
            <person name="Moule S."/>
            <person name="Mungall K.L."/>
            <person name="Murphy L.D."/>
            <person name="Niblett D."/>
            <person name="Odell C."/>
            <person name="Oliver K."/>
            <person name="O'Neil S."/>
            <person name="Pearson D."/>
            <person name="Quail M.A."/>
            <person name="Rabbinowitsch E."/>
            <person name="Rutherford K.M."/>
            <person name="Rutter S."/>
            <person name="Saunders D."/>
            <person name="Seeger K."/>
            <person name="Sharp S."/>
            <person name="Skelton J."/>
            <person name="Simmonds M.N."/>
            <person name="Squares R."/>
            <person name="Squares S."/>
            <person name="Stevens K."/>
            <person name="Taylor K."/>
            <person name="Taylor R.G."/>
            <person name="Tivey A."/>
            <person name="Walsh S.V."/>
            <person name="Warren T."/>
            <person name="Whitehead S."/>
            <person name="Woodward J.R."/>
            <person name="Volckaert G."/>
            <person name="Aert R."/>
            <person name="Robben J."/>
            <person name="Grymonprez B."/>
            <person name="Weltjens I."/>
            <person name="Vanstreels E."/>
            <person name="Rieger M."/>
            <person name="Schaefer M."/>
            <person name="Mueller-Auer S."/>
            <person name="Gabel C."/>
            <person name="Fuchs M."/>
            <person name="Duesterhoeft A."/>
            <person name="Fritzc C."/>
            <person name="Holzer E."/>
            <person name="Moestl D."/>
            <person name="Hilbert H."/>
            <person name="Borzym K."/>
            <person name="Langer I."/>
            <person name="Beck A."/>
            <person name="Lehrach H."/>
            <person name="Reinhardt R."/>
            <person name="Pohl T.M."/>
            <person name="Eger P."/>
            <person name="Zimmermann W."/>
            <person name="Wedler H."/>
            <person name="Wambutt R."/>
            <person name="Purnelle B."/>
            <person name="Goffeau A."/>
            <person name="Cadieu E."/>
            <person name="Dreano S."/>
            <person name="Gloux S."/>
            <person name="Lelaure V."/>
            <person name="Mottier S."/>
            <person name="Galibert F."/>
            <person name="Aves S.J."/>
            <person name="Xiang Z."/>
            <person name="Hunt C."/>
            <person name="Moore K."/>
            <person name="Hurst S.M."/>
            <person name="Lucas M."/>
            <person name="Rochet M."/>
            <person name="Gaillardin C."/>
            <person name="Tallada V.A."/>
            <person name="Garzon A."/>
            <person name="Thode G."/>
            <person name="Daga R.R."/>
            <person name="Cruzado L."/>
            <person name="Jimenez J."/>
            <person name="Sanchez M."/>
            <person name="del Rey F."/>
            <person name="Benito J."/>
            <person name="Dominguez A."/>
            <person name="Revuelta J.L."/>
            <person name="Moreno S."/>
            <person name="Armstrong J."/>
            <person name="Forsburg S.L."/>
            <person name="Cerutti L."/>
            <person name="Lowe T."/>
            <person name="McCombie W.R."/>
            <person name="Paulsen I."/>
            <person name="Potashkin J."/>
            <person name="Shpakovski G.V."/>
            <person name="Ussery D."/>
            <person name="Barrell B.G."/>
            <person name="Nurse P."/>
        </authorList>
    </citation>
    <scope>NUCLEOTIDE SEQUENCE [LARGE SCALE GENOMIC DNA]</scope>
    <source>
        <strain>972 / ATCC 24843</strain>
    </source>
</reference>
<reference key="3">
    <citation type="journal article" date="2005" name="Curr. Biol.">
        <title>A large-scale screen in S. pombe identifies seven novel genes required for critical meiotic events.</title>
        <authorList>
            <person name="Martin-Castellanos C."/>
            <person name="Blanco M."/>
            <person name="Rozalen A.E."/>
            <person name="Perez-Hidalgo L."/>
            <person name="Garcia A.I."/>
            <person name="Conde F."/>
            <person name="Mata J."/>
            <person name="Ellermeier C."/>
            <person name="Davis L."/>
            <person name="San-Segundo P."/>
            <person name="Smith G.R."/>
            <person name="Moreno S."/>
        </authorList>
    </citation>
    <scope>FUNCTION IN SPORULATION</scope>
</reference>
<reference key="4">
    <citation type="journal article" date="2006" name="Nat. Biotechnol.">
        <title>ORFeome cloning and global analysis of protein localization in the fission yeast Schizosaccharomyces pombe.</title>
        <authorList>
            <person name="Matsuyama A."/>
            <person name="Arai R."/>
            <person name="Yashiroda Y."/>
            <person name="Shirai A."/>
            <person name="Kamata A."/>
            <person name="Sekido S."/>
            <person name="Kobayashi Y."/>
            <person name="Hashimoto A."/>
            <person name="Hamamoto M."/>
            <person name="Hiraoka Y."/>
            <person name="Horinouchi S."/>
            <person name="Yoshida M."/>
        </authorList>
    </citation>
    <scope>SUBCELLULAR LOCATION [LARGE SCALE ANALYSIS]</scope>
</reference>
<dbReference type="EMBL" id="AB248101">
    <property type="protein sequence ID" value="BAE78593.1"/>
    <property type="molecule type" value="Genomic_DNA"/>
</dbReference>
<dbReference type="EMBL" id="CU329671">
    <property type="protein sequence ID" value="CAB44770.1"/>
    <property type="molecule type" value="Genomic_DNA"/>
</dbReference>
<dbReference type="PIR" id="T40057">
    <property type="entry name" value="T40057"/>
</dbReference>
<dbReference type="RefSeq" id="NP_596047.1">
    <property type="nucleotide sequence ID" value="NM_001021957.2"/>
</dbReference>
<dbReference type="SMR" id="Q2L4W6"/>
<dbReference type="BioGRID" id="277163">
    <property type="interactions" value="11"/>
</dbReference>
<dbReference type="FunCoup" id="Q2L4W6">
    <property type="interactions" value="34"/>
</dbReference>
<dbReference type="STRING" id="284812.Q2L4W6"/>
<dbReference type="PaxDb" id="4896-SPBC29A10.02.1"/>
<dbReference type="EnsemblFungi" id="SPBC29A10.02.1">
    <property type="protein sequence ID" value="SPBC29A10.02.1:pep"/>
    <property type="gene ID" value="SPBC29A10.02"/>
</dbReference>
<dbReference type="GeneID" id="2540637"/>
<dbReference type="KEGG" id="spo:2540637"/>
<dbReference type="PomBase" id="SPBC29A10.02">
    <property type="gene designation" value="spo5"/>
</dbReference>
<dbReference type="VEuPathDB" id="FungiDB:SPBC29A10.02"/>
<dbReference type="eggNOG" id="KOG4733">
    <property type="taxonomic scope" value="Eukaryota"/>
</dbReference>
<dbReference type="HOGENOM" id="CLU_447703_0_0_1"/>
<dbReference type="InParanoid" id="Q2L4W6"/>
<dbReference type="OMA" id="LPLHWNE"/>
<dbReference type="PhylomeDB" id="Q2L4W6"/>
<dbReference type="PRO" id="PR:Q2L4W6"/>
<dbReference type="Proteomes" id="UP000002485">
    <property type="component" value="Chromosome II"/>
</dbReference>
<dbReference type="GO" id="GO:0005737">
    <property type="term" value="C:cytoplasm"/>
    <property type="evidence" value="ECO:0000314"/>
    <property type="project" value="PomBase"/>
</dbReference>
<dbReference type="GO" id="GO:0005829">
    <property type="term" value="C:cytosol"/>
    <property type="evidence" value="ECO:0007005"/>
    <property type="project" value="PomBase"/>
</dbReference>
<dbReference type="GO" id="GO:0005634">
    <property type="term" value="C:nucleus"/>
    <property type="evidence" value="ECO:0000314"/>
    <property type="project" value="PomBase"/>
</dbReference>
<dbReference type="GO" id="GO:1990904">
    <property type="term" value="C:ribonucleoprotein complex"/>
    <property type="evidence" value="ECO:0000318"/>
    <property type="project" value="GO_Central"/>
</dbReference>
<dbReference type="GO" id="GO:0003730">
    <property type="term" value="F:mRNA 3'-UTR binding"/>
    <property type="evidence" value="ECO:0000318"/>
    <property type="project" value="GO_Central"/>
</dbReference>
<dbReference type="GO" id="GO:0008143">
    <property type="term" value="F:poly(A) binding"/>
    <property type="evidence" value="ECO:0000318"/>
    <property type="project" value="GO_Central"/>
</dbReference>
<dbReference type="GO" id="GO:0008266">
    <property type="term" value="F:poly(U) RNA binding"/>
    <property type="evidence" value="ECO:0000318"/>
    <property type="project" value="GO_Central"/>
</dbReference>
<dbReference type="GO" id="GO:0030437">
    <property type="term" value="P:ascospore formation"/>
    <property type="evidence" value="ECO:0000315"/>
    <property type="project" value="PomBase"/>
</dbReference>
<dbReference type="GO" id="GO:0031322">
    <property type="term" value="P:ascospore-type prospore-specific spindle pole body remodeling"/>
    <property type="evidence" value="ECO:0000315"/>
    <property type="project" value="PomBase"/>
</dbReference>
<dbReference type="GO" id="GO:0007127">
    <property type="term" value="P:meiosis I"/>
    <property type="evidence" value="ECO:0000315"/>
    <property type="project" value="PomBase"/>
</dbReference>
<dbReference type="GO" id="GO:0007135">
    <property type="term" value="P:meiosis II"/>
    <property type="evidence" value="ECO:0000315"/>
    <property type="project" value="PomBase"/>
</dbReference>
<dbReference type="GO" id="GO:0071763">
    <property type="term" value="P:nuclear membrane organization"/>
    <property type="evidence" value="ECO:0000315"/>
    <property type="project" value="PomBase"/>
</dbReference>
<dbReference type="CDD" id="cd12243">
    <property type="entry name" value="RRM1_MSSP"/>
    <property type="match status" value="1"/>
</dbReference>
<dbReference type="CDD" id="cd12244">
    <property type="entry name" value="RRM2_MSSP"/>
    <property type="match status" value="1"/>
</dbReference>
<dbReference type="Gene3D" id="3.30.70.330">
    <property type="match status" value="2"/>
</dbReference>
<dbReference type="InterPro" id="IPR012677">
    <property type="entry name" value="Nucleotide-bd_a/b_plait_sf"/>
</dbReference>
<dbReference type="InterPro" id="IPR035979">
    <property type="entry name" value="RBD_domain_sf"/>
</dbReference>
<dbReference type="InterPro" id="IPR000504">
    <property type="entry name" value="RRM_dom"/>
</dbReference>
<dbReference type="PANTHER" id="PTHR24012">
    <property type="entry name" value="RNA BINDING PROTEIN"/>
    <property type="match status" value="1"/>
</dbReference>
<dbReference type="Pfam" id="PF00076">
    <property type="entry name" value="RRM_1"/>
    <property type="match status" value="2"/>
</dbReference>
<dbReference type="SMART" id="SM00360">
    <property type="entry name" value="RRM"/>
    <property type="match status" value="2"/>
</dbReference>
<dbReference type="SUPFAM" id="SSF54928">
    <property type="entry name" value="RNA-binding domain, RBD"/>
    <property type="match status" value="2"/>
</dbReference>
<dbReference type="PROSITE" id="PS50102">
    <property type="entry name" value="RRM"/>
    <property type="match status" value="2"/>
</dbReference>
<accession>Q2L4W6</accession>
<accession>O94381</accession>